<reference key="1">
    <citation type="journal article" date="2006" name="Nat. Biotechnol.">
        <title>Genome sequence of the ubiquitous hydrocarbon-degrading marine bacterium Alcanivorax borkumensis.</title>
        <authorList>
            <person name="Schneiker S."/>
            <person name="Martins dos Santos V.A.P."/>
            <person name="Bartels D."/>
            <person name="Bekel T."/>
            <person name="Brecht M."/>
            <person name="Buhrmester J."/>
            <person name="Chernikova T.N."/>
            <person name="Denaro R."/>
            <person name="Ferrer M."/>
            <person name="Gertler C."/>
            <person name="Goesmann A."/>
            <person name="Golyshina O.V."/>
            <person name="Kaminski F."/>
            <person name="Khachane A.N."/>
            <person name="Lang S."/>
            <person name="Linke B."/>
            <person name="McHardy A.C."/>
            <person name="Meyer F."/>
            <person name="Nechitaylo T."/>
            <person name="Puehler A."/>
            <person name="Regenhardt D."/>
            <person name="Rupp O."/>
            <person name="Sabirova J.S."/>
            <person name="Selbitschka W."/>
            <person name="Yakimov M.M."/>
            <person name="Timmis K.N."/>
            <person name="Vorhoelter F.-J."/>
            <person name="Weidner S."/>
            <person name="Kaiser O."/>
            <person name="Golyshin P.N."/>
        </authorList>
    </citation>
    <scope>NUCLEOTIDE SEQUENCE [LARGE SCALE GENOMIC DNA]</scope>
    <source>
        <strain>ATCC 700651 / DSM 11573 / NCIMB 13689 / SK2</strain>
    </source>
</reference>
<comment type="function">
    <text evidence="1">Succinyl-CoA synthetase functions in the citric acid cycle (TCA), coupling the hydrolysis of succinyl-CoA to the synthesis of either ATP or GTP and thus represents the only step of substrate-level phosphorylation in the TCA. The beta subunit provides nucleotide specificity of the enzyme and binds the substrate succinate, while the binding sites for coenzyme A and phosphate are found in the alpha subunit.</text>
</comment>
<comment type="catalytic activity">
    <reaction evidence="1">
        <text>succinate + ATP + CoA = succinyl-CoA + ADP + phosphate</text>
        <dbReference type="Rhea" id="RHEA:17661"/>
        <dbReference type="ChEBI" id="CHEBI:30031"/>
        <dbReference type="ChEBI" id="CHEBI:30616"/>
        <dbReference type="ChEBI" id="CHEBI:43474"/>
        <dbReference type="ChEBI" id="CHEBI:57287"/>
        <dbReference type="ChEBI" id="CHEBI:57292"/>
        <dbReference type="ChEBI" id="CHEBI:456216"/>
        <dbReference type="EC" id="6.2.1.5"/>
    </reaction>
    <physiologicalReaction direction="right-to-left" evidence="1">
        <dbReference type="Rhea" id="RHEA:17663"/>
    </physiologicalReaction>
</comment>
<comment type="catalytic activity">
    <reaction evidence="1">
        <text>GTP + succinate + CoA = succinyl-CoA + GDP + phosphate</text>
        <dbReference type="Rhea" id="RHEA:22120"/>
        <dbReference type="ChEBI" id="CHEBI:30031"/>
        <dbReference type="ChEBI" id="CHEBI:37565"/>
        <dbReference type="ChEBI" id="CHEBI:43474"/>
        <dbReference type="ChEBI" id="CHEBI:57287"/>
        <dbReference type="ChEBI" id="CHEBI:57292"/>
        <dbReference type="ChEBI" id="CHEBI:58189"/>
    </reaction>
    <physiologicalReaction direction="right-to-left" evidence="1">
        <dbReference type="Rhea" id="RHEA:22122"/>
    </physiologicalReaction>
</comment>
<comment type="cofactor">
    <cofactor evidence="1">
        <name>Mg(2+)</name>
        <dbReference type="ChEBI" id="CHEBI:18420"/>
    </cofactor>
    <text evidence="1">Binds 1 Mg(2+) ion per subunit.</text>
</comment>
<comment type="pathway">
    <text evidence="1">Carbohydrate metabolism; tricarboxylic acid cycle; succinate from succinyl-CoA (ligase route): step 1/1.</text>
</comment>
<comment type="subunit">
    <text evidence="1">Heterotetramer of two alpha and two beta subunits.</text>
</comment>
<comment type="similarity">
    <text evidence="1">Belongs to the succinate/malate CoA ligase beta subunit family.</text>
</comment>
<sequence>MNLHEYQSKQLFADYGLPVSTGFACDTPEEVAAKAKEIGGDKWVVKAQVHAGGRGKAGGVKLVDTPEDAAAFAKKWLGKQLVTFQTDEHGQPVSKILVETCTDIAKELYLSAVLDRASRRVVFMASTEGGVDIETVAEETPEKILKAEIDPLVGAQPYQAREIAFKLGLEGKQVNQFAKIFVGLAKLFVDKDLALIEVNPLVITDTGDLHCLDAKINVDGSALYRHPDIKALDDPSQEDERERRAAEWDLNYVALEGNIGCMVNGAGLAMGTMDLVKLKGGAPANFLDVGGGATKERVTEAFKIILSDDQVKGVLVNIFGGIVRCDLIAEGIIGAVEEVGVTVPVVVRLEGNNAELGSQKLAESGMNIIAAQSFDDAAEQVVKAVGGAA</sequence>
<gene>
    <name evidence="1" type="primary">sucC</name>
    <name type="ordered locus">ABO_1493</name>
</gene>
<organism>
    <name type="scientific">Alcanivorax borkumensis (strain ATCC 700651 / DSM 11573 / NCIMB 13689 / SK2)</name>
    <dbReference type="NCBI Taxonomy" id="393595"/>
    <lineage>
        <taxon>Bacteria</taxon>
        <taxon>Pseudomonadati</taxon>
        <taxon>Pseudomonadota</taxon>
        <taxon>Gammaproteobacteria</taxon>
        <taxon>Oceanospirillales</taxon>
        <taxon>Alcanivoracaceae</taxon>
        <taxon>Alcanivorax</taxon>
    </lineage>
</organism>
<keyword id="KW-0067">ATP-binding</keyword>
<keyword id="KW-0436">Ligase</keyword>
<keyword id="KW-0460">Magnesium</keyword>
<keyword id="KW-0479">Metal-binding</keyword>
<keyword id="KW-0547">Nucleotide-binding</keyword>
<keyword id="KW-1185">Reference proteome</keyword>
<keyword id="KW-0816">Tricarboxylic acid cycle</keyword>
<dbReference type="EC" id="6.2.1.5" evidence="1"/>
<dbReference type="EMBL" id="AM286690">
    <property type="protein sequence ID" value="CAL16941.1"/>
    <property type="molecule type" value="Genomic_DNA"/>
</dbReference>
<dbReference type="RefSeq" id="WP_011588774.1">
    <property type="nucleotide sequence ID" value="NC_008260.1"/>
</dbReference>
<dbReference type="SMR" id="Q0VPF7"/>
<dbReference type="STRING" id="393595.ABO_1493"/>
<dbReference type="KEGG" id="abo:ABO_1493"/>
<dbReference type="eggNOG" id="COG0045">
    <property type="taxonomic scope" value="Bacteria"/>
</dbReference>
<dbReference type="HOGENOM" id="CLU_037430_0_2_6"/>
<dbReference type="OrthoDB" id="9802602at2"/>
<dbReference type="BRENDA" id="6.2.1.5">
    <property type="organism ID" value="7738"/>
</dbReference>
<dbReference type="UniPathway" id="UPA00223">
    <property type="reaction ID" value="UER00999"/>
</dbReference>
<dbReference type="Proteomes" id="UP000008871">
    <property type="component" value="Chromosome"/>
</dbReference>
<dbReference type="GO" id="GO:0005829">
    <property type="term" value="C:cytosol"/>
    <property type="evidence" value="ECO:0007669"/>
    <property type="project" value="TreeGrafter"/>
</dbReference>
<dbReference type="GO" id="GO:0042709">
    <property type="term" value="C:succinate-CoA ligase complex"/>
    <property type="evidence" value="ECO:0007669"/>
    <property type="project" value="TreeGrafter"/>
</dbReference>
<dbReference type="GO" id="GO:0005524">
    <property type="term" value="F:ATP binding"/>
    <property type="evidence" value="ECO:0007669"/>
    <property type="project" value="UniProtKB-UniRule"/>
</dbReference>
<dbReference type="GO" id="GO:0000287">
    <property type="term" value="F:magnesium ion binding"/>
    <property type="evidence" value="ECO:0007669"/>
    <property type="project" value="UniProtKB-UniRule"/>
</dbReference>
<dbReference type="GO" id="GO:0004775">
    <property type="term" value="F:succinate-CoA ligase (ADP-forming) activity"/>
    <property type="evidence" value="ECO:0007669"/>
    <property type="project" value="UniProtKB-UniRule"/>
</dbReference>
<dbReference type="GO" id="GO:0004776">
    <property type="term" value="F:succinate-CoA ligase (GDP-forming) activity"/>
    <property type="evidence" value="ECO:0007669"/>
    <property type="project" value="RHEA"/>
</dbReference>
<dbReference type="GO" id="GO:0006104">
    <property type="term" value="P:succinyl-CoA metabolic process"/>
    <property type="evidence" value="ECO:0007669"/>
    <property type="project" value="TreeGrafter"/>
</dbReference>
<dbReference type="GO" id="GO:0006099">
    <property type="term" value="P:tricarboxylic acid cycle"/>
    <property type="evidence" value="ECO:0007669"/>
    <property type="project" value="UniProtKB-UniRule"/>
</dbReference>
<dbReference type="FunFam" id="3.30.1490.20:FF:000002">
    <property type="entry name" value="Succinate--CoA ligase [ADP-forming] subunit beta"/>
    <property type="match status" value="1"/>
</dbReference>
<dbReference type="FunFam" id="3.30.470.20:FF:000002">
    <property type="entry name" value="Succinate--CoA ligase [ADP-forming] subunit beta"/>
    <property type="match status" value="1"/>
</dbReference>
<dbReference type="FunFam" id="3.40.50.261:FF:000001">
    <property type="entry name" value="Succinate--CoA ligase [ADP-forming] subunit beta"/>
    <property type="match status" value="1"/>
</dbReference>
<dbReference type="Gene3D" id="3.30.1490.20">
    <property type="entry name" value="ATP-grasp fold, A domain"/>
    <property type="match status" value="1"/>
</dbReference>
<dbReference type="Gene3D" id="3.30.470.20">
    <property type="entry name" value="ATP-grasp fold, B domain"/>
    <property type="match status" value="1"/>
</dbReference>
<dbReference type="Gene3D" id="3.40.50.261">
    <property type="entry name" value="Succinyl-CoA synthetase domains"/>
    <property type="match status" value="1"/>
</dbReference>
<dbReference type="HAMAP" id="MF_00558">
    <property type="entry name" value="Succ_CoA_beta"/>
    <property type="match status" value="1"/>
</dbReference>
<dbReference type="InterPro" id="IPR011761">
    <property type="entry name" value="ATP-grasp"/>
</dbReference>
<dbReference type="InterPro" id="IPR013650">
    <property type="entry name" value="ATP-grasp_succ-CoA_synth-type"/>
</dbReference>
<dbReference type="InterPro" id="IPR013815">
    <property type="entry name" value="ATP_grasp_subdomain_1"/>
</dbReference>
<dbReference type="InterPro" id="IPR017866">
    <property type="entry name" value="Succ-CoA_synthase_bsu_CS"/>
</dbReference>
<dbReference type="InterPro" id="IPR005811">
    <property type="entry name" value="SUCC_ACL_C"/>
</dbReference>
<dbReference type="InterPro" id="IPR005809">
    <property type="entry name" value="Succ_CoA_ligase-like_bsu"/>
</dbReference>
<dbReference type="InterPro" id="IPR016102">
    <property type="entry name" value="Succinyl-CoA_synth-like"/>
</dbReference>
<dbReference type="NCBIfam" id="NF001913">
    <property type="entry name" value="PRK00696.1"/>
    <property type="match status" value="1"/>
</dbReference>
<dbReference type="NCBIfam" id="TIGR01016">
    <property type="entry name" value="sucCoAbeta"/>
    <property type="match status" value="1"/>
</dbReference>
<dbReference type="PANTHER" id="PTHR11815:SF10">
    <property type="entry name" value="SUCCINATE--COA LIGASE [GDP-FORMING] SUBUNIT BETA, MITOCHONDRIAL"/>
    <property type="match status" value="1"/>
</dbReference>
<dbReference type="PANTHER" id="PTHR11815">
    <property type="entry name" value="SUCCINYL-COA SYNTHETASE BETA CHAIN"/>
    <property type="match status" value="1"/>
</dbReference>
<dbReference type="Pfam" id="PF08442">
    <property type="entry name" value="ATP-grasp_2"/>
    <property type="match status" value="1"/>
</dbReference>
<dbReference type="Pfam" id="PF00549">
    <property type="entry name" value="Ligase_CoA"/>
    <property type="match status" value="1"/>
</dbReference>
<dbReference type="PIRSF" id="PIRSF001554">
    <property type="entry name" value="SucCS_beta"/>
    <property type="match status" value="1"/>
</dbReference>
<dbReference type="SUPFAM" id="SSF56059">
    <property type="entry name" value="Glutathione synthetase ATP-binding domain-like"/>
    <property type="match status" value="1"/>
</dbReference>
<dbReference type="SUPFAM" id="SSF52210">
    <property type="entry name" value="Succinyl-CoA synthetase domains"/>
    <property type="match status" value="1"/>
</dbReference>
<dbReference type="PROSITE" id="PS50975">
    <property type="entry name" value="ATP_GRASP"/>
    <property type="match status" value="1"/>
</dbReference>
<dbReference type="PROSITE" id="PS01217">
    <property type="entry name" value="SUCCINYL_COA_LIG_3"/>
    <property type="match status" value="1"/>
</dbReference>
<evidence type="ECO:0000255" key="1">
    <source>
        <dbReference type="HAMAP-Rule" id="MF_00558"/>
    </source>
</evidence>
<feature type="chain" id="PRO_1000081994" description="Succinate--CoA ligase [ADP-forming] subunit beta">
    <location>
        <begin position="1"/>
        <end position="389"/>
    </location>
</feature>
<feature type="domain" description="ATP-grasp" evidence="1">
    <location>
        <begin position="9"/>
        <end position="244"/>
    </location>
</feature>
<feature type="binding site" evidence="1">
    <location>
        <position position="46"/>
    </location>
    <ligand>
        <name>ATP</name>
        <dbReference type="ChEBI" id="CHEBI:30616"/>
    </ligand>
</feature>
<feature type="binding site" evidence="1">
    <location>
        <begin position="53"/>
        <end position="55"/>
    </location>
    <ligand>
        <name>ATP</name>
        <dbReference type="ChEBI" id="CHEBI:30616"/>
    </ligand>
</feature>
<feature type="binding site" evidence="1">
    <location>
        <position position="99"/>
    </location>
    <ligand>
        <name>ATP</name>
        <dbReference type="ChEBI" id="CHEBI:30616"/>
    </ligand>
</feature>
<feature type="binding site" evidence="1">
    <location>
        <position position="102"/>
    </location>
    <ligand>
        <name>ATP</name>
        <dbReference type="ChEBI" id="CHEBI:30616"/>
    </ligand>
</feature>
<feature type="binding site" evidence="1">
    <location>
        <position position="107"/>
    </location>
    <ligand>
        <name>ATP</name>
        <dbReference type="ChEBI" id="CHEBI:30616"/>
    </ligand>
</feature>
<feature type="binding site" evidence="1">
    <location>
        <position position="199"/>
    </location>
    <ligand>
        <name>Mg(2+)</name>
        <dbReference type="ChEBI" id="CHEBI:18420"/>
    </ligand>
</feature>
<feature type="binding site" evidence="1">
    <location>
        <position position="213"/>
    </location>
    <ligand>
        <name>Mg(2+)</name>
        <dbReference type="ChEBI" id="CHEBI:18420"/>
    </ligand>
</feature>
<feature type="binding site" evidence="1">
    <location>
        <position position="264"/>
    </location>
    <ligand>
        <name>substrate</name>
        <note>ligand shared with subunit alpha</note>
    </ligand>
</feature>
<feature type="binding site" evidence="1">
    <location>
        <begin position="321"/>
        <end position="323"/>
    </location>
    <ligand>
        <name>substrate</name>
        <note>ligand shared with subunit alpha</note>
    </ligand>
</feature>
<protein>
    <recommendedName>
        <fullName evidence="1">Succinate--CoA ligase [ADP-forming] subunit beta</fullName>
        <ecNumber evidence="1">6.2.1.5</ecNumber>
    </recommendedName>
    <alternativeName>
        <fullName evidence="1">Succinyl-CoA synthetase subunit beta</fullName>
        <shortName evidence="1">SCS-beta</shortName>
    </alternativeName>
</protein>
<name>SUCC_ALCBS</name>
<proteinExistence type="inferred from homology"/>
<accession>Q0VPF7</accession>